<keyword id="KW-0963">Cytoplasm</keyword>
<keyword id="KW-0251">Elongation factor</keyword>
<keyword id="KW-0342">GTP-binding</keyword>
<keyword id="KW-0378">Hydrolase</keyword>
<keyword id="KW-0460">Magnesium</keyword>
<keyword id="KW-0479">Metal-binding</keyword>
<keyword id="KW-0547">Nucleotide-binding</keyword>
<keyword id="KW-0648">Protein biosynthesis</keyword>
<evidence type="ECO:0000250" key="1"/>
<evidence type="ECO:0000255" key="2">
    <source>
        <dbReference type="HAMAP-Rule" id="MF_00118"/>
    </source>
</evidence>
<comment type="function">
    <text evidence="2">GTP hydrolase that promotes the GTP-dependent binding of aminoacyl-tRNA to the A-site of ribosomes during protein biosynthesis.</text>
</comment>
<comment type="catalytic activity">
    <reaction evidence="2">
        <text>GTP + H2O = GDP + phosphate + H(+)</text>
        <dbReference type="Rhea" id="RHEA:19669"/>
        <dbReference type="ChEBI" id="CHEBI:15377"/>
        <dbReference type="ChEBI" id="CHEBI:15378"/>
        <dbReference type="ChEBI" id="CHEBI:37565"/>
        <dbReference type="ChEBI" id="CHEBI:43474"/>
        <dbReference type="ChEBI" id="CHEBI:58189"/>
        <dbReference type="EC" id="3.6.5.3"/>
    </reaction>
    <physiologicalReaction direction="left-to-right" evidence="2">
        <dbReference type="Rhea" id="RHEA:19670"/>
    </physiologicalReaction>
</comment>
<comment type="subunit">
    <text evidence="2">Monomer.</text>
</comment>
<comment type="subcellular location">
    <subcellularLocation>
        <location evidence="2">Cytoplasm</location>
    </subcellularLocation>
</comment>
<comment type="similarity">
    <text evidence="2">Belongs to the TRAFAC class translation factor GTPase superfamily. Classic translation factor GTPase family. EF-Tu/EF-1A subfamily.</text>
</comment>
<protein>
    <recommendedName>
        <fullName evidence="2">Elongation factor Tu</fullName>
        <shortName evidence="2">EF-Tu</shortName>
        <ecNumber evidence="2">3.6.5.3</ecNumber>
    </recommendedName>
</protein>
<proteinExistence type="inferred from homology"/>
<gene>
    <name evidence="2" type="primary">tuf</name>
    <name type="ordered locus">Cvib_0244</name>
</gene>
<feature type="chain" id="PRO_1000076106" description="Elongation factor Tu">
    <location>
        <begin position="1"/>
        <end position="393"/>
    </location>
</feature>
<feature type="domain" description="tr-type G">
    <location>
        <begin position="10"/>
        <end position="203"/>
    </location>
</feature>
<feature type="region of interest" description="G1" evidence="1">
    <location>
        <begin position="19"/>
        <end position="26"/>
    </location>
</feature>
<feature type="region of interest" description="G2" evidence="1">
    <location>
        <begin position="60"/>
        <end position="64"/>
    </location>
</feature>
<feature type="region of interest" description="G3" evidence="1">
    <location>
        <begin position="81"/>
        <end position="84"/>
    </location>
</feature>
<feature type="region of interest" description="G4" evidence="1">
    <location>
        <begin position="136"/>
        <end position="139"/>
    </location>
</feature>
<feature type="region of interest" description="G5" evidence="1">
    <location>
        <begin position="173"/>
        <end position="175"/>
    </location>
</feature>
<feature type="binding site" evidence="2">
    <location>
        <begin position="19"/>
        <end position="26"/>
    </location>
    <ligand>
        <name>GTP</name>
        <dbReference type="ChEBI" id="CHEBI:37565"/>
    </ligand>
</feature>
<feature type="binding site" evidence="2">
    <location>
        <position position="26"/>
    </location>
    <ligand>
        <name>Mg(2+)</name>
        <dbReference type="ChEBI" id="CHEBI:18420"/>
    </ligand>
</feature>
<feature type="binding site" evidence="2">
    <location>
        <begin position="81"/>
        <end position="85"/>
    </location>
    <ligand>
        <name>GTP</name>
        <dbReference type="ChEBI" id="CHEBI:37565"/>
    </ligand>
</feature>
<feature type="binding site" evidence="2">
    <location>
        <begin position="136"/>
        <end position="139"/>
    </location>
    <ligand>
        <name>GTP</name>
        <dbReference type="ChEBI" id="CHEBI:37565"/>
    </ligand>
</feature>
<accession>A4SCQ7</accession>
<reference key="1">
    <citation type="submission" date="2007-03" db="EMBL/GenBank/DDBJ databases">
        <title>Complete sequence of Prosthecochloris vibrioformis DSM 265.</title>
        <authorList>
            <consortium name="US DOE Joint Genome Institute"/>
            <person name="Copeland A."/>
            <person name="Lucas S."/>
            <person name="Lapidus A."/>
            <person name="Barry K."/>
            <person name="Detter J.C."/>
            <person name="Glavina del Rio T."/>
            <person name="Hammon N."/>
            <person name="Israni S."/>
            <person name="Pitluck S."/>
            <person name="Schmutz J."/>
            <person name="Larimer F."/>
            <person name="Land M."/>
            <person name="Hauser L."/>
            <person name="Mikhailova N."/>
            <person name="Li T."/>
            <person name="Overmann J."/>
            <person name="Schuster S.C."/>
            <person name="Bryant D.A."/>
            <person name="Richardson P."/>
        </authorList>
    </citation>
    <scope>NUCLEOTIDE SEQUENCE [LARGE SCALE GENOMIC DNA]</scope>
    <source>
        <strain>DSM 265 / 1930</strain>
    </source>
</reference>
<sequence length="393" mass="43015">MAKESYKRDKPHVNIGTIGHVDHGKTTLTAAITSVLAKSGMADAREFGDIDKAPEERERGITISTAHVEYQTVKRHYAHIDCPGHADYIKNMITGAAQMDGAILVVAGTDGPMPQTREHILLARQVNVPALVVFLNKVDIADPELLELVEMELRELLTEYGFPGDDIPIIKGSALKALDGDAEGEKAIMELMDAVDNYIPEPVRDVDKPFLMPVEDVFSISGRGTVGTGRIERGRIKINEEVEIVGIRDTRKSVVTGIEMFQKLLDEGQAGDNAGLLLRGVDKNDLERGMVIAKPGTIKPHTKFKAEVYILKKEEGGRHTPFFTNYRPQFYFRTTDVTGAVSLPEGVEMVMPGDNLSVEVELIAPIAMDEGLRFAIREGGRTVGAGSVTKIND</sequence>
<name>EFTU_CHLPM</name>
<organism>
    <name type="scientific">Chlorobium phaeovibrioides (strain DSM 265 / 1930)</name>
    <name type="common">Prosthecochloris vibrioformis (strain DSM 265)</name>
    <dbReference type="NCBI Taxonomy" id="290318"/>
    <lineage>
        <taxon>Bacteria</taxon>
        <taxon>Pseudomonadati</taxon>
        <taxon>Chlorobiota</taxon>
        <taxon>Chlorobiia</taxon>
        <taxon>Chlorobiales</taxon>
        <taxon>Chlorobiaceae</taxon>
        <taxon>Chlorobium/Pelodictyon group</taxon>
        <taxon>Chlorobium</taxon>
    </lineage>
</organism>
<dbReference type="EC" id="3.6.5.3" evidence="2"/>
<dbReference type="EMBL" id="CP000607">
    <property type="protein sequence ID" value="ABP36266.1"/>
    <property type="molecule type" value="Genomic_DNA"/>
</dbReference>
<dbReference type="SMR" id="A4SCQ7"/>
<dbReference type="STRING" id="290318.Cvib_0244"/>
<dbReference type="KEGG" id="pvi:Cvib_0244"/>
<dbReference type="eggNOG" id="COG0050">
    <property type="taxonomic scope" value="Bacteria"/>
</dbReference>
<dbReference type="HOGENOM" id="CLU_007265_0_1_10"/>
<dbReference type="OrthoDB" id="9804504at2"/>
<dbReference type="GO" id="GO:0005829">
    <property type="term" value="C:cytosol"/>
    <property type="evidence" value="ECO:0007669"/>
    <property type="project" value="TreeGrafter"/>
</dbReference>
<dbReference type="GO" id="GO:0005525">
    <property type="term" value="F:GTP binding"/>
    <property type="evidence" value="ECO:0007669"/>
    <property type="project" value="UniProtKB-UniRule"/>
</dbReference>
<dbReference type="GO" id="GO:0003924">
    <property type="term" value="F:GTPase activity"/>
    <property type="evidence" value="ECO:0007669"/>
    <property type="project" value="InterPro"/>
</dbReference>
<dbReference type="GO" id="GO:0003746">
    <property type="term" value="F:translation elongation factor activity"/>
    <property type="evidence" value="ECO:0007669"/>
    <property type="project" value="UniProtKB-UniRule"/>
</dbReference>
<dbReference type="CDD" id="cd01884">
    <property type="entry name" value="EF_Tu"/>
    <property type="match status" value="1"/>
</dbReference>
<dbReference type="CDD" id="cd03697">
    <property type="entry name" value="EFTU_II"/>
    <property type="match status" value="1"/>
</dbReference>
<dbReference type="CDD" id="cd03707">
    <property type="entry name" value="EFTU_III"/>
    <property type="match status" value="1"/>
</dbReference>
<dbReference type="FunFam" id="2.40.30.10:FF:000001">
    <property type="entry name" value="Elongation factor Tu"/>
    <property type="match status" value="1"/>
</dbReference>
<dbReference type="FunFam" id="3.40.50.300:FF:000003">
    <property type="entry name" value="Elongation factor Tu"/>
    <property type="match status" value="1"/>
</dbReference>
<dbReference type="Gene3D" id="3.40.50.300">
    <property type="entry name" value="P-loop containing nucleotide triphosphate hydrolases"/>
    <property type="match status" value="1"/>
</dbReference>
<dbReference type="Gene3D" id="2.40.30.10">
    <property type="entry name" value="Translation factors"/>
    <property type="match status" value="2"/>
</dbReference>
<dbReference type="HAMAP" id="MF_00118_B">
    <property type="entry name" value="EF_Tu_B"/>
    <property type="match status" value="1"/>
</dbReference>
<dbReference type="InterPro" id="IPR041709">
    <property type="entry name" value="EF-Tu_GTP-bd"/>
</dbReference>
<dbReference type="InterPro" id="IPR050055">
    <property type="entry name" value="EF-Tu_GTPase"/>
</dbReference>
<dbReference type="InterPro" id="IPR004161">
    <property type="entry name" value="EFTu-like_2"/>
</dbReference>
<dbReference type="InterPro" id="IPR033720">
    <property type="entry name" value="EFTU_2"/>
</dbReference>
<dbReference type="InterPro" id="IPR031157">
    <property type="entry name" value="G_TR_CS"/>
</dbReference>
<dbReference type="InterPro" id="IPR027417">
    <property type="entry name" value="P-loop_NTPase"/>
</dbReference>
<dbReference type="InterPro" id="IPR005225">
    <property type="entry name" value="Small_GTP-bd"/>
</dbReference>
<dbReference type="InterPro" id="IPR000795">
    <property type="entry name" value="T_Tr_GTP-bd_dom"/>
</dbReference>
<dbReference type="InterPro" id="IPR009000">
    <property type="entry name" value="Transl_B-barrel_sf"/>
</dbReference>
<dbReference type="InterPro" id="IPR009001">
    <property type="entry name" value="Transl_elong_EF1A/Init_IF2_C"/>
</dbReference>
<dbReference type="InterPro" id="IPR004541">
    <property type="entry name" value="Transl_elong_EFTu/EF1A_bac/org"/>
</dbReference>
<dbReference type="InterPro" id="IPR004160">
    <property type="entry name" value="Transl_elong_EFTu/EF1A_C"/>
</dbReference>
<dbReference type="NCBIfam" id="TIGR00485">
    <property type="entry name" value="EF-Tu"/>
    <property type="match status" value="1"/>
</dbReference>
<dbReference type="NCBIfam" id="NF000766">
    <property type="entry name" value="PRK00049.1"/>
    <property type="match status" value="1"/>
</dbReference>
<dbReference type="NCBIfam" id="NF009372">
    <property type="entry name" value="PRK12735.1"/>
    <property type="match status" value="1"/>
</dbReference>
<dbReference type="NCBIfam" id="NF009373">
    <property type="entry name" value="PRK12736.1"/>
    <property type="match status" value="1"/>
</dbReference>
<dbReference type="NCBIfam" id="TIGR00231">
    <property type="entry name" value="small_GTP"/>
    <property type="match status" value="1"/>
</dbReference>
<dbReference type="PANTHER" id="PTHR43721:SF22">
    <property type="entry name" value="ELONGATION FACTOR TU, MITOCHONDRIAL"/>
    <property type="match status" value="1"/>
</dbReference>
<dbReference type="PANTHER" id="PTHR43721">
    <property type="entry name" value="ELONGATION FACTOR TU-RELATED"/>
    <property type="match status" value="1"/>
</dbReference>
<dbReference type="Pfam" id="PF00009">
    <property type="entry name" value="GTP_EFTU"/>
    <property type="match status" value="1"/>
</dbReference>
<dbReference type="Pfam" id="PF03144">
    <property type="entry name" value="GTP_EFTU_D2"/>
    <property type="match status" value="1"/>
</dbReference>
<dbReference type="Pfam" id="PF03143">
    <property type="entry name" value="GTP_EFTU_D3"/>
    <property type="match status" value="1"/>
</dbReference>
<dbReference type="PRINTS" id="PR00315">
    <property type="entry name" value="ELONGATNFCT"/>
</dbReference>
<dbReference type="SUPFAM" id="SSF50465">
    <property type="entry name" value="EF-Tu/eEF-1alpha/eIF2-gamma C-terminal domain"/>
    <property type="match status" value="1"/>
</dbReference>
<dbReference type="SUPFAM" id="SSF52540">
    <property type="entry name" value="P-loop containing nucleoside triphosphate hydrolases"/>
    <property type="match status" value="1"/>
</dbReference>
<dbReference type="SUPFAM" id="SSF50447">
    <property type="entry name" value="Translation proteins"/>
    <property type="match status" value="1"/>
</dbReference>
<dbReference type="PROSITE" id="PS00301">
    <property type="entry name" value="G_TR_1"/>
    <property type="match status" value="1"/>
</dbReference>
<dbReference type="PROSITE" id="PS51722">
    <property type="entry name" value="G_TR_2"/>
    <property type="match status" value="1"/>
</dbReference>